<accession>A0Q2J7</accession>
<organism>
    <name type="scientific">Clostridium novyi (strain NT)</name>
    <dbReference type="NCBI Taxonomy" id="386415"/>
    <lineage>
        <taxon>Bacteria</taxon>
        <taxon>Bacillati</taxon>
        <taxon>Bacillota</taxon>
        <taxon>Clostridia</taxon>
        <taxon>Eubacteriales</taxon>
        <taxon>Clostridiaceae</taxon>
        <taxon>Clostridium</taxon>
    </lineage>
</organism>
<name>TRMB_CLONN</name>
<feature type="chain" id="PRO_0000288139" description="tRNA (guanine-N(7)-)-methyltransferase">
    <location>
        <begin position="1"/>
        <end position="214"/>
    </location>
</feature>
<feature type="region of interest" description="Interaction with RNA" evidence="1">
    <location>
        <begin position="125"/>
        <end position="130"/>
    </location>
</feature>
<feature type="binding site" evidence="1">
    <location>
        <position position="45"/>
    </location>
    <ligand>
        <name>S-adenosyl-L-methionine</name>
        <dbReference type="ChEBI" id="CHEBI:59789"/>
    </ligand>
</feature>
<feature type="binding site" evidence="1">
    <location>
        <position position="70"/>
    </location>
    <ligand>
        <name>S-adenosyl-L-methionine</name>
        <dbReference type="ChEBI" id="CHEBI:59789"/>
    </ligand>
</feature>
<feature type="binding site" evidence="1">
    <location>
        <position position="97"/>
    </location>
    <ligand>
        <name>S-adenosyl-L-methionine</name>
        <dbReference type="ChEBI" id="CHEBI:59789"/>
    </ligand>
</feature>
<feature type="binding site" evidence="1">
    <location>
        <position position="119"/>
    </location>
    <ligand>
        <name>S-adenosyl-L-methionine</name>
        <dbReference type="ChEBI" id="CHEBI:59789"/>
    </ligand>
</feature>
<feature type="binding site" evidence="1">
    <location>
        <position position="123"/>
    </location>
    <ligand>
        <name>substrate</name>
    </ligand>
</feature>
<feature type="binding site" evidence="1">
    <location>
        <position position="155"/>
    </location>
    <ligand>
        <name>substrate</name>
    </ligand>
</feature>
<feature type="binding site" evidence="1">
    <location>
        <begin position="193"/>
        <end position="196"/>
    </location>
    <ligand>
        <name>substrate</name>
    </ligand>
</feature>
<proteinExistence type="inferred from homology"/>
<evidence type="ECO:0000255" key="1">
    <source>
        <dbReference type="HAMAP-Rule" id="MF_01057"/>
    </source>
</evidence>
<keyword id="KW-0489">Methyltransferase</keyword>
<keyword id="KW-1185">Reference proteome</keyword>
<keyword id="KW-0949">S-adenosyl-L-methionine</keyword>
<keyword id="KW-0808">Transferase</keyword>
<keyword id="KW-0819">tRNA processing</keyword>
<gene>
    <name evidence="1" type="primary">trmB</name>
    <name type="ordered locus">NT01CX_0357</name>
</gene>
<sequence>MRLRKKWWARPELEASPIFKSLDEARELKGNWKDEFKNNNDIYLELGCGRGGFAVQAASKFNDKNLISIDLKDEVLVYALKNIVDAELENVRLVAMNIGMIAEIFDENEISRIYINFCNPWPKDRHNKRRLTHTRFLTEYKKFIKPGTEIHFKTDDLDLFNDSLVYFEESGFELLYKTYDLHNSDYADENLMTEYETKFKEKGIKSKFLIAKLK</sequence>
<dbReference type="EC" id="2.1.1.33" evidence="1"/>
<dbReference type="EMBL" id="CP000382">
    <property type="protein sequence ID" value="ABK62412.1"/>
    <property type="molecule type" value="Genomic_DNA"/>
</dbReference>
<dbReference type="RefSeq" id="WP_011722833.1">
    <property type="nucleotide sequence ID" value="NC_008593.1"/>
</dbReference>
<dbReference type="SMR" id="A0Q2J7"/>
<dbReference type="STRING" id="386415.NT01CX_0357"/>
<dbReference type="KEGG" id="cno:NT01CX_0357"/>
<dbReference type="PATRIC" id="fig|386415.7.peg.1881"/>
<dbReference type="eggNOG" id="COG0220">
    <property type="taxonomic scope" value="Bacteria"/>
</dbReference>
<dbReference type="HOGENOM" id="CLU_050910_2_1_9"/>
<dbReference type="UniPathway" id="UPA00989"/>
<dbReference type="Proteomes" id="UP000008220">
    <property type="component" value="Chromosome"/>
</dbReference>
<dbReference type="GO" id="GO:0043527">
    <property type="term" value="C:tRNA methyltransferase complex"/>
    <property type="evidence" value="ECO:0007669"/>
    <property type="project" value="TreeGrafter"/>
</dbReference>
<dbReference type="GO" id="GO:0008176">
    <property type="term" value="F:tRNA (guanine(46)-N7)-methyltransferase activity"/>
    <property type="evidence" value="ECO:0007669"/>
    <property type="project" value="UniProtKB-UniRule"/>
</dbReference>
<dbReference type="CDD" id="cd02440">
    <property type="entry name" value="AdoMet_MTases"/>
    <property type="match status" value="1"/>
</dbReference>
<dbReference type="Gene3D" id="3.40.50.150">
    <property type="entry name" value="Vaccinia Virus protein VP39"/>
    <property type="match status" value="1"/>
</dbReference>
<dbReference type="HAMAP" id="MF_01057">
    <property type="entry name" value="tRNA_methyltr_TrmB"/>
    <property type="match status" value="1"/>
</dbReference>
<dbReference type="InterPro" id="IPR029063">
    <property type="entry name" value="SAM-dependent_MTases_sf"/>
</dbReference>
<dbReference type="InterPro" id="IPR003358">
    <property type="entry name" value="tRNA_(Gua-N-7)_MeTrfase_Trmb"/>
</dbReference>
<dbReference type="InterPro" id="IPR055361">
    <property type="entry name" value="tRNA_methyltr_TrmB_bact"/>
</dbReference>
<dbReference type="NCBIfam" id="NF001080">
    <property type="entry name" value="PRK00121.2-2"/>
    <property type="match status" value="1"/>
</dbReference>
<dbReference type="NCBIfam" id="TIGR00091">
    <property type="entry name" value="tRNA (guanosine(46)-N7)-methyltransferase TrmB"/>
    <property type="match status" value="1"/>
</dbReference>
<dbReference type="PANTHER" id="PTHR23417">
    <property type="entry name" value="3-DEOXY-D-MANNO-OCTULOSONIC-ACID TRANSFERASE/TRNA GUANINE-N 7 - -METHYLTRANSFERASE"/>
    <property type="match status" value="1"/>
</dbReference>
<dbReference type="PANTHER" id="PTHR23417:SF14">
    <property type="entry name" value="PENTACOTRIPEPTIDE-REPEAT REGION OF PRORP DOMAIN-CONTAINING PROTEIN"/>
    <property type="match status" value="1"/>
</dbReference>
<dbReference type="Pfam" id="PF02390">
    <property type="entry name" value="Methyltransf_4"/>
    <property type="match status" value="1"/>
</dbReference>
<dbReference type="SUPFAM" id="SSF53335">
    <property type="entry name" value="S-adenosyl-L-methionine-dependent methyltransferases"/>
    <property type="match status" value="1"/>
</dbReference>
<dbReference type="PROSITE" id="PS51625">
    <property type="entry name" value="SAM_MT_TRMB"/>
    <property type="match status" value="1"/>
</dbReference>
<comment type="function">
    <text evidence="1">Catalyzes the formation of N(7)-methylguanine at position 46 (m7G46) in tRNA.</text>
</comment>
<comment type="catalytic activity">
    <reaction evidence="1">
        <text>guanosine(46) in tRNA + S-adenosyl-L-methionine = N(7)-methylguanosine(46) in tRNA + S-adenosyl-L-homocysteine</text>
        <dbReference type="Rhea" id="RHEA:42708"/>
        <dbReference type="Rhea" id="RHEA-COMP:10188"/>
        <dbReference type="Rhea" id="RHEA-COMP:10189"/>
        <dbReference type="ChEBI" id="CHEBI:57856"/>
        <dbReference type="ChEBI" id="CHEBI:59789"/>
        <dbReference type="ChEBI" id="CHEBI:74269"/>
        <dbReference type="ChEBI" id="CHEBI:74480"/>
        <dbReference type="EC" id="2.1.1.33"/>
    </reaction>
</comment>
<comment type="pathway">
    <text evidence="1">tRNA modification; N(7)-methylguanine-tRNA biosynthesis.</text>
</comment>
<comment type="similarity">
    <text evidence="1">Belongs to the class I-like SAM-binding methyltransferase superfamily. TrmB family.</text>
</comment>
<protein>
    <recommendedName>
        <fullName evidence="1">tRNA (guanine-N(7)-)-methyltransferase</fullName>
        <ecNumber evidence="1">2.1.1.33</ecNumber>
    </recommendedName>
    <alternativeName>
        <fullName evidence="1">tRNA (guanine(46)-N(7))-methyltransferase</fullName>
    </alternativeName>
    <alternativeName>
        <fullName evidence="1">tRNA(m7G46)-methyltransferase</fullName>
    </alternativeName>
</protein>
<reference key="1">
    <citation type="journal article" date="2006" name="Nat. Biotechnol.">
        <title>The genome and transcriptomes of the anti-tumor agent Clostridium novyi-NT.</title>
        <authorList>
            <person name="Bettegowda C."/>
            <person name="Huang X."/>
            <person name="Lin J."/>
            <person name="Cheong I."/>
            <person name="Kohli M."/>
            <person name="Szabo S.A."/>
            <person name="Zhang X."/>
            <person name="Diaz L.A. Jr."/>
            <person name="Velculescu V.E."/>
            <person name="Parmigiani G."/>
            <person name="Kinzler K.W."/>
            <person name="Vogelstein B."/>
            <person name="Zhou S."/>
        </authorList>
    </citation>
    <scope>NUCLEOTIDE SEQUENCE [LARGE SCALE GENOMIC DNA]</scope>
    <source>
        <strain>NT</strain>
    </source>
</reference>